<reference key="1">
    <citation type="journal article" date="2005" name="Science">
        <title>The transcriptional landscape of the mammalian genome.</title>
        <authorList>
            <person name="Carninci P."/>
            <person name="Kasukawa T."/>
            <person name="Katayama S."/>
            <person name="Gough J."/>
            <person name="Frith M.C."/>
            <person name="Maeda N."/>
            <person name="Oyama R."/>
            <person name="Ravasi T."/>
            <person name="Lenhard B."/>
            <person name="Wells C."/>
            <person name="Kodzius R."/>
            <person name="Shimokawa K."/>
            <person name="Bajic V.B."/>
            <person name="Brenner S.E."/>
            <person name="Batalov S."/>
            <person name="Forrest A.R."/>
            <person name="Zavolan M."/>
            <person name="Davis M.J."/>
            <person name="Wilming L.G."/>
            <person name="Aidinis V."/>
            <person name="Allen J.E."/>
            <person name="Ambesi-Impiombato A."/>
            <person name="Apweiler R."/>
            <person name="Aturaliya R.N."/>
            <person name="Bailey T.L."/>
            <person name="Bansal M."/>
            <person name="Baxter L."/>
            <person name="Beisel K.W."/>
            <person name="Bersano T."/>
            <person name="Bono H."/>
            <person name="Chalk A.M."/>
            <person name="Chiu K.P."/>
            <person name="Choudhary V."/>
            <person name="Christoffels A."/>
            <person name="Clutterbuck D.R."/>
            <person name="Crowe M.L."/>
            <person name="Dalla E."/>
            <person name="Dalrymple B.P."/>
            <person name="de Bono B."/>
            <person name="Della Gatta G."/>
            <person name="di Bernardo D."/>
            <person name="Down T."/>
            <person name="Engstrom P."/>
            <person name="Fagiolini M."/>
            <person name="Faulkner G."/>
            <person name="Fletcher C.F."/>
            <person name="Fukushima T."/>
            <person name="Furuno M."/>
            <person name="Futaki S."/>
            <person name="Gariboldi M."/>
            <person name="Georgii-Hemming P."/>
            <person name="Gingeras T.R."/>
            <person name="Gojobori T."/>
            <person name="Green R.E."/>
            <person name="Gustincich S."/>
            <person name="Harbers M."/>
            <person name="Hayashi Y."/>
            <person name="Hensch T.K."/>
            <person name="Hirokawa N."/>
            <person name="Hill D."/>
            <person name="Huminiecki L."/>
            <person name="Iacono M."/>
            <person name="Ikeo K."/>
            <person name="Iwama A."/>
            <person name="Ishikawa T."/>
            <person name="Jakt M."/>
            <person name="Kanapin A."/>
            <person name="Katoh M."/>
            <person name="Kawasawa Y."/>
            <person name="Kelso J."/>
            <person name="Kitamura H."/>
            <person name="Kitano H."/>
            <person name="Kollias G."/>
            <person name="Krishnan S.P."/>
            <person name="Kruger A."/>
            <person name="Kummerfeld S.K."/>
            <person name="Kurochkin I.V."/>
            <person name="Lareau L.F."/>
            <person name="Lazarevic D."/>
            <person name="Lipovich L."/>
            <person name="Liu J."/>
            <person name="Liuni S."/>
            <person name="McWilliam S."/>
            <person name="Madan Babu M."/>
            <person name="Madera M."/>
            <person name="Marchionni L."/>
            <person name="Matsuda H."/>
            <person name="Matsuzawa S."/>
            <person name="Miki H."/>
            <person name="Mignone F."/>
            <person name="Miyake S."/>
            <person name="Morris K."/>
            <person name="Mottagui-Tabar S."/>
            <person name="Mulder N."/>
            <person name="Nakano N."/>
            <person name="Nakauchi H."/>
            <person name="Ng P."/>
            <person name="Nilsson R."/>
            <person name="Nishiguchi S."/>
            <person name="Nishikawa S."/>
            <person name="Nori F."/>
            <person name="Ohara O."/>
            <person name="Okazaki Y."/>
            <person name="Orlando V."/>
            <person name="Pang K.C."/>
            <person name="Pavan W.J."/>
            <person name="Pavesi G."/>
            <person name="Pesole G."/>
            <person name="Petrovsky N."/>
            <person name="Piazza S."/>
            <person name="Reed J."/>
            <person name="Reid J.F."/>
            <person name="Ring B.Z."/>
            <person name="Ringwald M."/>
            <person name="Rost B."/>
            <person name="Ruan Y."/>
            <person name="Salzberg S.L."/>
            <person name="Sandelin A."/>
            <person name="Schneider C."/>
            <person name="Schoenbach C."/>
            <person name="Sekiguchi K."/>
            <person name="Semple C.A."/>
            <person name="Seno S."/>
            <person name="Sessa L."/>
            <person name="Sheng Y."/>
            <person name="Shibata Y."/>
            <person name="Shimada H."/>
            <person name="Shimada K."/>
            <person name="Silva D."/>
            <person name="Sinclair B."/>
            <person name="Sperling S."/>
            <person name="Stupka E."/>
            <person name="Sugiura K."/>
            <person name="Sultana R."/>
            <person name="Takenaka Y."/>
            <person name="Taki K."/>
            <person name="Tammoja K."/>
            <person name="Tan S.L."/>
            <person name="Tang S."/>
            <person name="Taylor M.S."/>
            <person name="Tegner J."/>
            <person name="Teichmann S.A."/>
            <person name="Ueda H.R."/>
            <person name="van Nimwegen E."/>
            <person name="Verardo R."/>
            <person name="Wei C.L."/>
            <person name="Yagi K."/>
            <person name="Yamanishi H."/>
            <person name="Zabarovsky E."/>
            <person name="Zhu S."/>
            <person name="Zimmer A."/>
            <person name="Hide W."/>
            <person name="Bult C."/>
            <person name="Grimmond S.M."/>
            <person name="Teasdale R.D."/>
            <person name="Liu E.T."/>
            <person name="Brusic V."/>
            <person name="Quackenbush J."/>
            <person name="Wahlestedt C."/>
            <person name="Mattick J.S."/>
            <person name="Hume D.A."/>
            <person name="Kai C."/>
            <person name="Sasaki D."/>
            <person name="Tomaru Y."/>
            <person name="Fukuda S."/>
            <person name="Kanamori-Katayama M."/>
            <person name="Suzuki M."/>
            <person name="Aoki J."/>
            <person name="Arakawa T."/>
            <person name="Iida J."/>
            <person name="Imamura K."/>
            <person name="Itoh M."/>
            <person name="Kato T."/>
            <person name="Kawaji H."/>
            <person name="Kawagashira N."/>
            <person name="Kawashima T."/>
            <person name="Kojima M."/>
            <person name="Kondo S."/>
            <person name="Konno H."/>
            <person name="Nakano K."/>
            <person name="Ninomiya N."/>
            <person name="Nishio T."/>
            <person name="Okada M."/>
            <person name="Plessy C."/>
            <person name="Shibata K."/>
            <person name="Shiraki T."/>
            <person name="Suzuki S."/>
            <person name="Tagami M."/>
            <person name="Waki K."/>
            <person name="Watahiki A."/>
            <person name="Okamura-Oho Y."/>
            <person name="Suzuki H."/>
            <person name="Kawai J."/>
            <person name="Hayashizaki Y."/>
        </authorList>
    </citation>
    <scope>NUCLEOTIDE SEQUENCE [LARGE SCALE MRNA]</scope>
    <source>
        <strain>C57BL/6J</strain>
        <tissue>Bone marrow</tissue>
        <tissue>Head</tissue>
    </source>
</reference>
<reference key="2">
    <citation type="submission" date="2005-07" db="EMBL/GenBank/DDBJ databases">
        <authorList>
            <person name="Mural R.J."/>
            <person name="Adams M.D."/>
            <person name="Myers E.W."/>
            <person name="Smith H.O."/>
            <person name="Venter J.C."/>
        </authorList>
    </citation>
    <scope>NUCLEOTIDE SEQUENCE [LARGE SCALE GENOMIC DNA]</scope>
</reference>
<reference key="3">
    <citation type="journal article" date="2004" name="Genome Res.">
        <title>The status, quality, and expansion of the NIH full-length cDNA project: the Mammalian Gene Collection (MGC).</title>
        <authorList>
            <consortium name="The MGC Project Team"/>
        </authorList>
    </citation>
    <scope>NUCLEOTIDE SEQUENCE [LARGE SCALE MRNA]</scope>
    <source>
        <tissue>Brain</tissue>
    </source>
</reference>
<reference key="4">
    <citation type="journal article" date="2009" name="Immunity">
        <title>The phagosomal proteome in interferon-gamma-activated macrophages.</title>
        <authorList>
            <person name="Trost M."/>
            <person name="English L."/>
            <person name="Lemieux S."/>
            <person name="Courcelles M."/>
            <person name="Desjardins M."/>
            <person name="Thibault P."/>
        </authorList>
    </citation>
    <scope>PHOSPHORYLATION [LARGE SCALE ANALYSIS] AT SER-340; SER-344 AND SER-346</scope>
    <scope>IDENTIFICATION BY MASS SPECTROMETRY [LARGE SCALE ANALYSIS]</scope>
</reference>
<reference key="5">
    <citation type="journal article" date="2009" name="Mol. Cell. Proteomics">
        <title>Large scale localization of protein phosphorylation by use of electron capture dissociation mass spectrometry.</title>
        <authorList>
            <person name="Sweet S.M."/>
            <person name="Bailey C.M."/>
            <person name="Cunningham D.L."/>
            <person name="Heath J.K."/>
            <person name="Cooper H.J."/>
        </authorList>
    </citation>
    <scope>PHOSPHORYLATION [LARGE SCALE ANALYSIS] AT SER-358</scope>
    <scope>IDENTIFICATION BY MASS SPECTROMETRY [LARGE SCALE ANALYSIS]</scope>
    <source>
        <tissue>Embryonic fibroblast</tissue>
    </source>
</reference>
<reference key="6">
    <citation type="journal article" date="2010" name="Cell">
        <title>A tissue-specific atlas of mouse protein phosphorylation and expression.</title>
        <authorList>
            <person name="Huttlin E.L."/>
            <person name="Jedrychowski M.P."/>
            <person name="Elias J.E."/>
            <person name="Goswami T."/>
            <person name="Rad R."/>
            <person name="Beausoleil S.A."/>
            <person name="Villen J."/>
            <person name="Haas W."/>
            <person name="Sowa M.E."/>
            <person name="Gygi S.P."/>
        </authorList>
    </citation>
    <scope>PHOSPHORYLATION [LARGE SCALE ANALYSIS] AT SER-186; SER-204; SER-236; SER-340; SER-342; SER-344; SER-346 AND SER-383</scope>
    <scope>IDENTIFICATION BY MASS SPECTROMETRY [LARGE SCALE ANALYSIS]</scope>
    <source>
        <tissue>Brain</tissue>
        <tissue>Brown adipose tissue</tissue>
        <tissue>Kidney</tissue>
        <tissue>Liver</tissue>
        <tissue>Lung</tissue>
        <tissue>Pancreas</tissue>
        <tissue>Spleen</tissue>
        <tissue>Testis</tissue>
    </source>
</reference>
<comment type="function">
    <text evidence="2">A Rab11 effector protein involved in the endosomal recycling process. Also involved in controlling membrane trafficking along the phagocytic pathway and in phagocytosis. Interaction with RAB14 may function in the process of neurite formation.</text>
</comment>
<comment type="subunit">
    <text evidence="2">Homooligomer. Interacts with RAB11A, RAB11B, RAB25, RAB4A and RAB14.</text>
</comment>
<comment type="subcellular location">
    <subcellularLocation>
        <location evidence="2">Recycling endosome</location>
    </subcellularLocation>
    <subcellularLocation>
        <location evidence="2">Cytoplasmic vesicle</location>
    </subcellularLocation>
    <text evidence="2">Membrane-bound. RAB11A rather than RAB4A mediates localization in the endocytic recycling compartment (ERC). Colocalizes with RAB11A at phagosomes. Colocalizes with Rab11 and RAB14 on punctate vesicles.</text>
</comment>
<comment type="domain">
    <text evidence="2">The FIP-RBD is involved in the interaction with Rab proteins.</text>
</comment>
<dbReference type="EMBL" id="AK014696">
    <property type="protein sequence ID" value="BAB29507.1"/>
    <property type="molecule type" value="mRNA"/>
</dbReference>
<dbReference type="EMBL" id="AK151024">
    <property type="protein sequence ID" value="BAE30042.1"/>
    <property type="molecule type" value="mRNA"/>
</dbReference>
<dbReference type="EMBL" id="CH466580">
    <property type="protein sequence ID" value="EDL32793.1"/>
    <property type="molecule type" value="Genomic_DNA"/>
</dbReference>
<dbReference type="EMBL" id="BC125400">
    <property type="protein sequence ID" value="AAI25401.1"/>
    <property type="molecule type" value="mRNA"/>
</dbReference>
<dbReference type="EMBL" id="BC132094">
    <property type="protein sequence ID" value="AAI32095.1"/>
    <property type="molecule type" value="mRNA"/>
</dbReference>
<dbReference type="CCDS" id="CCDS52534.1"/>
<dbReference type="RefSeq" id="NP_083699.2">
    <property type="nucleotide sequence ID" value="NM_029423.2"/>
</dbReference>
<dbReference type="SMR" id="Q9D620"/>
<dbReference type="BioGRID" id="217725">
    <property type="interactions" value="15"/>
</dbReference>
<dbReference type="FunCoup" id="Q9D620">
    <property type="interactions" value="1210"/>
</dbReference>
<dbReference type="IntAct" id="Q9D620">
    <property type="interactions" value="12"/>
</dbReference>
<dbReference type="STRING" id="10090.ENSMUSP00000058042"/>
<dbReference type="GlyGen" id="Q9D620">
    <property type="glycosylation" value="1 site"/>
</dbReference>
<dbReference type="iPTMnet" id="Q9D620"/>
<dbReference type="jPOST" id="Q9D620"/>
<dbReference type="PaxDb" id="10090-ENSMUSP00000058042"/>
<dbReference type="PeptideAtlas" id="Q9D620"/>
<dbReference type="ProteomicsDB" id="254919"/>
<dbReference type="Pumba" id="Q9D620"/>
<dbReference type="Antibodypedia" id="4467">
    <property type="antibodies" value="214 antibodies from 35 providers"/>
</dbReference>
<dbReference type="DNASU" id="75767"/>
<dbReference type="Ensembl" id="ENSMUST00000033878.14">
    <property type="protein sequence ID" value="ENSMUSP00000033878.7"/>
    <property type="gene ID" value="ENSMUSG00000031488.15"/>
</dbReference>
<dbReference type="GeneID" id="75767"/>
<dbReference type="KEGG" id="mmu:75767"/>
<dbReference type="UCSC" id="uc009lia.2">
    <property type="organism name" value="mouse"/>
</dbReference>
<dbReference type="AGR" id="MGI:1923017"/>
<dbReference type="CTD" id="80223"/>
<dbReference type="MGI" id="MGI:1923017">
    <property type="gene designation" value="Rab11fip1"/>
</dbReference>
<dbReference type="VEuPathDB" id="HostDB:ENSMUSG00000031488"/>
<dbReference type="eggNOG" id="ENOG502QVT0">
    <property type="taxonomic scope" value="Eukaryota"/>
</dbReference>
<dbReference type="GeneTree" id="ENSGT00940000159649"/>
<dbReference type="HOGENOM" id="CLU_015242_0_0_1"/>
<dbReference type="InParanoid" id="Q9D620"/>
<dbReference type="OrthoDB" id="8956628at2759"/>
<dbReference type="BioGRID-ORCS" id="75767">
    <property type="hits" value="2 hits in 77 CRISPR screens"/>
</dbReference>
<dbReference type="ChiTaRS" id="Rab11fip1">
    <property type="organism name" value="mouse"/>
</dbReference>
<dbReference type="PRO" id="PR:Q9D620"/>
<dbReference type="Proteomes" id="UP000000589">
    <property type="component" value="Chromosome 8"/>
</dbReference>
<dbReference type="RNAct" id="Q9D620">
    <property type="molecule type" value="protein"/>
</dbReference>
<dbReference type="Bgee" id="ENSMUSG00000031488">
    <property type="expression patterns" value="Expressed in granulocyte and 112 other cell types or tissues"/>
</dbReference>
<dbReference type="ExpressionAtlas" id="Q9D620">
    <property type="expression patterns" value="baseline and differential"/>
</dbReference>
<dbReference type="GO" id="GO:0016020">
    <property type="term" value="C:membrane"/>
    <property type="evidence" value="ECO:0007669"/>
    <property type="project" value="UniProtKB-KW"/>
</dbReference>
<dbReference type="GO" id="GO:0055037">
    <property type="term" value="C:recycling endosome"/>
    <property type="evidence" value="ECO:0007669"/>
    <property type="project" value="UniProtKB-SubCell"/>
</dbReference>
<dbReference type="GO" id="GO:0031267">
    <property type="term" value="F:small GTPase binding"/>
    <property type="evidence" value="ECO:0007669"/>
    <property type="project" value="InterPro"/>
</dbReference>
<dbReference type="GO" id="GO:0015031">
    <property type="term" value="P:protein transport"/>
    <property type="evidence" value="ECO:0007669"/>
    <property type="project" value="UniProtKB-KW"/>
</dbReference>
<dbReference type="CDD" id="cd08682">
    <property type="entry name" value="C2_Rab11-FIP_classI"/>
    <property type="match status" value="1"/>
</dbReference>
<dbReference type="FunFam" id="2.60.40.150:FF:000077">
    <property type="entry name" value="rab11 family-interacting protein 1 isoform X1"/>
    <property type="match status" value="1"/>
</dbReference>
<dbReference type="FunFam" id="1.20.5.2440:FF:000002">
    <property type="entry name" value="rab11 family-interacting protein 2 isoform X1"/>
    <property type="match status" value="1"/>
</dbReference>
<dbReference type="Gene3D" id="1.20.5.2440">
    <property type="match status" value="1"/>
</dbReference>
<dbReference type="Gene3D" id="2.60.40.150">
    <property type="entry name" value="C2 domain"/>
    <property type="match status" value="1"/>
</dbReference>
<dbReference type="InterPro" id="IPR000008">
    <property type="entry name" value="C2_dom"/>
</dbReference>
<dbReference type="InterPro" id="IPR035892">
    <property type="entry name" value="C2_domain_sf"/>
</dbReference>
<dbReference type="InterPro" id="IPR037245">
    <property type="entry name" value="FIP-RBD_C_sf"/>
</dbReference>
<dbReference type="InterPro" id="IPR037789">
    <property type="entry name" value="FIP_classI"/>
</dbReference>
<dbReference type="InterPro" id="IPR019018">
    <property type="entry name" value="Rab-bd_FIP-RBD"/>
</dbReference>
<dbReference type="PANTHER" id="PTHR15746:SF22">
    <property type="entry name" value="RAB11 FAMILY-INTERACTING PROTEIN 1"/>
    <property type="match status" value="1"/>
</dbReference>
<dbReference type="PANTHER" id="PTHR15746">
    <property type="entry name" value="RAB11-RELATED"/>
    <property type="match status" value="1"/>
</dbReference>
<dbReference type="Pfam" id="PF00168">
    <property type="entry name" value="C2"/>
    <property type="match status" value="1"/>
</dbReference>
<dbReference type="Pfam" id="PF09457">
    <property type="entry name" value="RBD-FIP"/>
    <property type="match status" value="1"/>
</dbReference>
<dbReference type="SMART" id="SM00239">
    <property type="entry name" value="C2"/>
    <property type="match status" value="1"/>
</dbReference>
<dbReference type="SUPFAM" id="SSF49562">
    <property type="entry name" value="C2 domain (Calcium/lipid-binding domain, CaLB)"/>
    <property type="match status" value="1"/>
</dbReference>
<dbReference type="SUPFAM" id="SSF144270">
    <property type="entry name" value="Eferin C-derminal domain-like"/>
    <property type="match status" value="1"/>
</dbReference>
<dbReference type="PROSITE" id="PS50004">
    <property type="entry name" value="C2"/>
    <property type="match status" value="1"/>
</dbReference>
<dbReference type="PROSITE" id="PS51511">
    <property type="entry name" value="FIP_RBD"/>
    <property type="match status" value="1"/>
</dbReference>
<organism>
    <name type="scientific">Mus musculus</name>
    <name type="common">Mouse</name>
    <dbReference type="NCBI Taxonomy" id="10090"/>
    <lineage>
        <taxon>Eukaryota</taxon>
        <taxon>Metazoa</taxon>
        <taxon>Chordata</taxon>
        <taxon>Craniata</taxon>
        <taxon>Vertebrata</taxon>
        <taxon>Euteleostomi</taxon>
        <taxon>Mammalia</taxon>
        <taxon>Eutheria</taxon>
        <taxon>Euarchontoglires</taxon>
        <taxon>Glires</taxon>
        <taxon>Rodentia</taxon>
        <taxon>Myomorpha</taxon>
        <taxon>Muroidea</taxon>
        <taxon>Muridae</taxon>
        <taxon>Murinae</taxon>
        <taxon>Mus</taxon>
        <taxon>Mus</taxon>
    </lineage>
</organism>
<keyword id="KW-0968">Cytoplasmic vesicle</keyword>
<keyword id="KW-0967">Endosome</keyword>
<keyword id="KW-0597">Phosphoprotein</keyword>
<keyword id="KW-0653">Protein transport</keyword>
<keyword id="KW-1185">Reference proteome</keyword>
<keyword id="KW-0813">Transport</keyword>
<proteinExistence type="evidence at protein level"/>
<evidence type="ECO:0000250" key="1"/>
<evidence type="ECO:0000250" key="2">
    <source>
        <dbReference type="UniProtKB" id="Q6WKZ4"/>
    </source>
</evidence>
<evidence type="ECO:0000255" key="3">
    <source>
        <dbReference type="PROSITE-ProRule" id="PRU00041"/>
    </source>
</evidence>
<evidence type="ECO:0000255" key="4">
    <source>
        <dbReference type="PROSITE-ProRule" id="PRU00844"/>
    </source>
</evidence>
<evidence type="ECO:0000256" key="5">
    <source>
        <dbReference type="SAM" id="MobiDB-lite"/>
    </source>
</evidence>
<evidence type="ECO:0000305" key="6"/>
<evidence type="ECO:0007744" key="7">
    <source>
    </source>
</evidence>
<evidence type="ECO:0007744" key="8">
    <source>
    </source>
</evidence>
<evidence type="ECO:0007744" key="9">
    <source>
    </source>
</evidence>
<feature type="chain" id="PRO_0000097305" description="Rab11 family-interacting protein 1">
    <location>
        <begin position="1"/>
        <end position="645"/>
    </location>
</feature>
<feature type="domain" description="C2" evidence="3">
    <location>
        <begin position="1"/>
        <end position="128"/>
    </location>
</feature>
<feature type="domain" description="FIP-RBD" evidence="4">
    <location>
        <begin position="573"/>
        <end position="635"/>
    </location>
</feature>
<feature type="region of interest" description="Disordered" evidence="5">
    <location>
        <begin position="171"/>
        <end position="215"/>
    </location>
</feature>
<feature type="region of interest" description="Disordered" evidence="5">
    <location>
        <begin position="259"/>
        <end position="296"/>
    </location>
</feature>
<feature type="region of interest" description="Disordered" evidence="5">
    <location>
        <begin position="330"/>
        <end position="545"/>
    </location>
</feature>
<feature type="region of interest" description="Necessary for interaction with RAB4A and RAB11A, subcellular location and endosomal recycling" evidence="1">
    <location>
        <begin position="581"/>
        <end position="645"/>
    </location>
</feature>
<feature type="compositionally biased region" description="Basic and acidic residues" evidence="5">
    <location>
        <begin position="171"/>
        <end position="187"/>
    </location>
</feature>
<feature type="compositionally biased region" description="Polar residues" evidence="5">
    <location>
        <begin position="282"/>
        <end position="293"/>
    </location>
</feature>
<feature type="compositionally biased region" description="Basic and acidic residues" evidence="5">
    <location>
        <begin position="378"/>
        <end position="391"/>
    </location>
</feature>
<feature type="compositionally biased region" description="Basic and acidic residues" evidence="5">
    <location>
        <begin position="418"/>
        <end position="432"/>
    </location>
</feature>
<feature type="compositionally biased region" description="Basic and acidic residues" evidence="5">
    <location>
        <begin position="459"/>
        <end position="487"/>
    </location>
</feature>
<feature type="modified residue" description="Phosphoserine" evidence="9">
    <location>
        <position position="186"/>
    </location>
</feature>
<feature type="modified residue" description="Phosphoserine" evidence="9">
    <location>
        <position position="204"/>
    </location>
</feature>
<feature type="modified residue" description="Phosphoserine" evidence="2">
    <location>
        <position position="208"/>
    </location>
</feature>
<feature type="modified residue" description="Phosphoserine" evidence="9">
    <location>
        <position position="236"/>
    </location>
</feature>
<feature type="modified residue" description="Phosphoserine" evidence="2">
    <location>
        <position position="301"/>
    </location>
</feature>
<feature type="modified residue" description="Phosphoserine" evidence="2">
    <location>
        <position position="316"/>
    </location>
</feature>
<feature type="modified residue" description="Phosphoserine" evidence="8 9">
    <location>
        <position position="340"/>
    </location>
</feature>
<feature type="modified residue" description="Phosphoserine" evidence="9">
    <location>
        <position position="342"/>
    </location>
</feature>
<feature type="modified residue" description="Phosphoserine" evidence="8 9">
    <location>
        <position position="344"/>
    </location>
</feature>
<feature type="modified residue" description="Phosphoserine" evidence="8 9">
    <location>
        <position position="346"/>
    </location>
</feature>
<feature type="modified residue" description="Phosphoserine" evidence="2">
    <location>
        <position position="357"/>
    </location>
</feature>
<feature type="modified residue" description="Phosphoserine" evidence="7">
    <location>
        <position position="358"/>
    </location>
</feature>
<feature type="modified residue" description="Phosphoserine" evidence="9">
    <location>
        <position position="383"/>
    </location>
</feature>
<feature type="modified residue" description="Phosphoserine" evidence="2">
    <location>
        <position position="434"/>
    </location>
</feature>
<feature type="sequence conflict" description="In Ref. 1; BAB29507." evidence="6" ref="1">
    <original>S</original>
    <variation>T</variation>
    <location>
        <position position="60"/>
    </location>
</feature>
<feature type="sequence conflict" description="In Ref. 1; BAE30042." evidence="6" ref="1">
    <original>E</original>
    <variation>K</variation>
    <location>
        <position position="207"/>
    </location>
</feature>
<feature type="sequence conflict" description="In Ref. 1; BAE30042." evidence="6" ref="1">
    <original>Q</original>
    <variation>H</variation>
    <location>
        <position position="256"/>
    </location>
</feature>
<feature type="sequence conflict" description="In Ref. 1; BAE30042." evidence="6" ref="1">
    <original>T</original>
    <variation>A</variation>
    <location>
        <position position="283"/>
    </location>
</feature>
<sequence>MSLAASAGRGPGTMWSPTHVQVTVLQARGLRAKGPGGTSDAYAVIQVGKEKYATSVSERSLGAPVWREEATFELPPLLSSGAAPAAAATLQLTVLHRALLGLDKFLGRAEVDLRELHRDQGRRKKQWYTLKSKPGKKDKERGEIEVDIQFMRNNMTASMFDLSMKDKSRNPFGKLKDKIKGKNKDSASDTASAIVPSVTPSVDSDDESFSKDKKKKSKIKTLFSKSSLQKTPLSQSMSVLPTSKSDKVLLRAGDFQSQWDDDAHEDESSSASDVMSHKRTSSTDQQPNQSNFSLPKKEGLSFLGGLRSKNDSLSRSTVCINGNHVYMEQPEARSEIRESSPSNSPSPQGFRRKHLFSSTENLAARSPKEPGEGGGTSSDRRLSDSSTKDSMKSMSLPSYRPLTSGDNRESMSPANVEAARETKDSKKQESKKSSLLSLVTGKRDAAAKGSESEPLPTVSEKEKERKGALVEAQLREEDLMRRPEKDALPVASQWGSSLNPFEDVQISDPGATTESRSEPKPPVPAARVPQTKAVKPRPHPVKPMNTTATKIANSSLGTATIITENLISEALMKKYQPSDPAFAYAQLTHDELIQLVLKQKETISKKEFQVRELEDYIDNLLVRVMEETPNILRVPAQMGKKAGKM</sequence>
<protein>
    <recommendedName>
        <fullName>Rab11 family-interacting protein 1</fullName>
        <shortName>Rab11-FIP1</shortName>
    </recommendedName>
    <alternativeName>
        <fullName>Rab-coupling protein</fullName>
    </alternativeName>
</protein>
<gene>
    <name type="primary">Rab11fip1</name>
    <name type="synonym">Rcp</name>
</gene>
<name>RFIP1_MOUSE</name>
<accession>Q9D620</accession>
<accession>Q05A58</accession>
<accession>Q3UBC2</accession>
<accession>Q8BN24</accession>